<organism>
    <name type="scientific">Mycobacterium bovis (strain ATCC BAA-935 / AF2122/97)</name>
    <dbReference type="NCBI Taxonomy" id="233413"/>
    <lineage>
        <taxon>Bacteria</taxon>
        <taxon>Bacillati</taxon>
        <taxon>Actinomycetota</taxon>
        <taxon>Actinomycetes</taxon>
        <taxon>Mycobacteriales</taxon>
        <taxon>Mycobacteriaceae</taxon>
        <taxon>Mycobacterium</taxon>
        <taxon>Mycobacterium tuberculosis complex</taxon>
    </lineage>
</organism>
<feature type="chain" id="PRO_0000177388" description="Large ribosomal subunit protein bL35">
    <location>
        <begin position="1"/>
        <end position="64"/>
    </location>
</feature>
<feature type="region of interest" description="Disordered" evidence="2">
    <location>
        <begin position="1"/>
        <end position="22"/>
    </location>
</feature>
<sequence>MPKAKTHSGASKRFRRTGTGKIVRQKANRRHLLEHKPSTRTRRLDGRTVVAANDTKRVTSLLNG</sequence>
<reference key="1">
    <citation type="journal article" date="2003" name="Proc. Natl. Acad. Sci. U.S.A.">
        <title>The complete genome sequence of Mycobacterium bovis.</title>
        <authorList>
            <person name="Garnier T."/>
            <person name="Eiglmeier K."/>
            <person name="Camus J.-C."/>
            <person name="Medina N."/>
            <person name="Mansoor H."/>
            <person name="Pryor M."/>
            <person name="Duthoy S."/>
            <person name="Grondin S."/>
            <person name="Lacroix C."/>
            <person name="Monsempe C."/>
            <person name="Simon S."/>
            <person name="Harris B."/>
            <person name="Atkin R."/>
            <person name="Doggett J."/>
            <person name="Mayes R."/>
            <person name="Keating L."/>
            <person name="Wheeler P.R."/>
            <person name="Parkhill J."/>
            <person name="Barrell B.G."/>
            <person name="Cole S.T."/>
            <person name="Gordon S.V."/>
            <person name="Hewinson R.G."/>
        </authorList>
    </citation>
    <scope>NUCLEOTIDE SEQUENCE [LARGE SCALE GENOMIC DNA]</scope>
    <source>
        <strain>ATCC BAA-935 / AF2122/97</strain>
    </source>
</reference>
<reference key="2">
    <citation type="journal article" date="2017" name="Genome Announc.">
        <title>Updated reference genome sequence and annotation of Mycobacterium bovis AF2122/97.</title>
        <authorList>
            <person name="Malone K.M."/>
            <person name="Farrell D."/>
            <person name="Stuber T.P."/>
            <person name="Schubert O.T."/>
            <person name="Aebersold R."/>
            <person name="Robbe-Austerman S."/>
            <person name="Gordon S.V."/>
        </authorList>
    </citation>
    <scope>NUCLEOTIDE SEQUENCE [LARGE SCALE GENOMIC DNA]</scope>
    <scope>GENOME REANNOTATION</scope>
    <source>
        <strain>ATCC BAA-935 / AF2122/97</strain>
    </source>
</reference>
<accession>P66272</accession>
<accession>A0A1R3Y115</accession>
<accession>P94976</accession>
<accession>X2BIS3</accession>
<keyword id="KW-1185">Reference proteome</keyword>
<keyword id="KW-0687">Ribonucleoprotein</keyword>
<keyword id="KW-0689">Ribosomal protein</keyword>
<protein>
    <recommendedName>
        <fullName evidence="1">Large ribosomal subunit protein bL35</fullName>
    </recommendedName>
    <alternativeName>
        <fullName evidence="3">50S ribosomal protein L35</fullName>
    </alternativeName>
</protein>
<name>RL35_MYCBO</name>
<evidence type="ECO:0000255" key="1">
    <source>
        <dbReference type="HAMAP-Rule" id="MF_00514"/>
    </source>
</evidence>
<evidence type="ECO:0000256" key="2">
    <source>
        <dbReference type="SAM" id="MobiDB-lite"/>
    </source>
</evidence>
<evidence type="ECO:0000305" key="3"/>
<proteinExistence type="inferred from homology"/>
<gene>
    <name evidence="1" type="primary">rpmI</name>
    <name type="ordered locus">BQ2027_MB1669</name>
</gene>
<comment type="similarity">
    <text evidence="1">Belongs to the bacterial ribosomal protein bL35 family.</text>
</comment>
<dbReference type="EMBL" id="LT708304">
    <property type="protein sequence ID" value="SIU00273.1"/>
    <property type="molecule type" value="Genomic_DNA"/>
</dbReference>
<dbReference type="RefSeq" id="NP_855322.1">
    <property type="nucleotide sequence ID" value="NC_002945.3"/>
</dbReference>
<dbReference type="RefSeq" id="WP_003408106.1">
    <property type="nucleotide sequence ID" value="NC_002945.4"/>
</dbReference>
<dbReference type="SMR" id="P66272"/>
<dbReference type="GeneID" id="45425612"/>
<dbReference type="KEGG" id="mbo:BQ2027_MB1669"/>
<dbReference type="PATRIC" id="fig|233413.5.peg.1822"/>
<dbReference type="Proteomes" id="UP000001419">
    <property type="component" value="Chromosome"/>
</dbReference>
<dbReference type="GO" id="GO:0022625">
    <property type="term" value="C:cytosolic large ribosomal subunit"/>
    <property type="evidence" value="ECO:0007669"/>
    <property type="project" value="TreeGrafter"/>
</dbReference>
<dbReference type="GO" id="GO:0003735">
    <property type="term" value="F:structural constituent of ribosome"/>
    <property type="evidence" value="ECO:0007669"/>
    <property type="project" value="InterPro"/>
</dbReference>
<dbReference type="GO" id="GO:0006412">
    <property type="term" value="P:translation"/>
    <property type="evidence" value="ECO:0007669"/>
    <property type="project" value="UniProtKB-UniRule"/>
</dbReference>
<dbReference type="FunFam" id="4.10.410.60:FF:000001">
    <property type="entry name" value="50S ribosomal protein L35"/>
    <property type="match status" value="1"/>
</dbReference>
<dbReference type="Gene3D" id="4.10.410.60">
    <property type="match status" value="1"/>
</dbReference>
<dbReference type="HAMAP" id="MF_00514">
    <property type="entry name" value="Ribosomal_bL35"/>
    <property type="match status" value="1"/>
</dbReference>
<dbReference type="InterPro" id="IPR001706">
    <property type="entry name" value="Ribosomal_bL35"/>
</dbReference>
<dbReference type="InterPro" id="IPR021137">
    <property type="entry name" value="Ribosomal_bL35-like"/>
</dbReference>
<dbReference type="InterPro" id="IPR018265">
    <property type="entry name" value="Ribosomal_bL35_CS"/>
</dbReference>
<dbReference type="InterPro" id="IPR037229">
    <property type="entry name" value="Ribosomal_bL35_sf"/>
</dbReference>
<dbReference type="NCBIfam" id="TIGR00001">
    <property type="entry name" value="rpmI_bact"/>
    <property type="match status" value="1"/>
</dbReference>
<dbReference type="PANTHER" id="PTHR33343">
    <property type="entry name" value="54S RIBOSOMAL PROTEIN BL35M"/>
    <property type="match status" value="1"/>
</dbReference>
<dbReference type="PANTHER" id="PTHR33343:SF1">
    <property type="entry name" value="LARGE RIBOSOMAL SUBUNIT PROTEIN BL35M"/>
    <property type="match status" value="1"/>
</dbReference>
<dbReference type="Pfam" id="PF01632">
    <property type="entry name" value="Ribosomal_L35p"/>
    <property type="match status" value="1"/>
</dbReference>
<dbReference type="PRINTS" id="PR00064">
    <property type="entry name" value="RIBOSOMALL35"/>
</dbReference>
<dbReference type="SUPFAM" id="SSF143034">
    <property type="entry name" value="L35p-like"/>
    <property type="match status" value="1"/>
</dbReference>
<dbReference type="PROSITE" id="PS00936">
    <property type="entry name" value="RIBOSOMAL_L35"/>
    <property type="match status" value="1"/>
</dbReference>